<comment type="function">
    <text evidence="1">Catalyzes the synthesis of GMP from XMP.</text>
</comment>
<comment type="catalytic activity">
    <reaction evidence="1">
        <text>XMP + L-glutamine + ATP + H2O = GMP + L-glutamate + AMP + diphosphate + 2 H(+)</text>
        <dbReference type="Rhea" id="RHEA:11680"/>
        <dbReference type="ChEBI" id="CHEBI:15377"/>
        <dbReference type="ChEBI" id="CHEBI:15378"/>
        <dbReference type="ChEBI" id="CHEBI:29985"/>
        <dbReference type="ChEBI" id="CHEBI:30616"/>
        <dbReference type="ChEBI" id="CHEBI:33019"/>
        <dbReference type="ChEBI" id="CHEBI:57464"/>
        <dbReference type="ChEBI" id="CHEBI:58115"/>
        <dbReference type="ChEBI" id="CHEBI:58359"/>
        <dbReference type="ChEBI" id="CHEBI:456215"/>
        <dbReference type="EC" id="6.3.5.2"/>
    </reaction>
</comment>
<comment type="pathway">
    <text evidence="1">Purine metabolism; GMP biosynthesis; GMP from XMP (L-Gln route): step 1/1.</text>
</comment>
<comment type="subunit">
    <text evidence="1">Homodimer.</text>
</comment>
<sequence>MNKELVLVVDFGGQYNQLIARRVRENRVYCEIVPYTTSIEDIKEKAPKGIIFTGGPNSVYGENAPRVQKELFDLGIPVLGICYGDQLMAHSLEGEVTSPEKREYGKTDVNLDNSSLLFKDMKEKDQCWMSHTDYISKVPKGFKIIATTDECPCAAMENAEKKLYGVQFHPEVEHTLFGKKMLKNFLFNVCNLKGDWSMSSFAEQQIKAIKEKVGDKKVICALSGGVDSSVAAVIVHKAIGKQLTCIFVDHGLLRKDEGDQVEKIFKDQFDMNLIRVNAQDRFLGKLKGVSDPERKRKIIGEEFIRVFEEEAKKLGDISFLVQGTIYPDIVESGTNTSATIKSHHNVGGLPEDMEFKLIEPLRELFKDEVRAVGEELGIPHKLVWRQPFPGPGLAIRVLGEVTEEKLAITREADAIFREEIAKAGLEEKIWQYFACLPNIQSVGVMGDERTYCHTIALRAVTSSDAMTSDWARIPYEVLDKVSRRIVNEVKEVNRIVYDVTSKPPATIEWE</sequence>
<accession>A7GIN0</accession>
<name>GUAA_CLOBL</name>
<proteinExistence type="inferred from homology"/>
<organism>
    <name type="scientific">Clostridium botulinum (strain Langeland / NCTC 10281 / Type F)</name>
    <dbReference type="NCBI Taxonomy" id="441772"/>
    <lineage>
        <taxon>Bacteria</taxon>
        <taxon>Bacillati</taxon>
        <taxon>Bacillota</taxon>
        <taxon>Clostridia</taxon>
        <taxon>Eubacteriales</taxon>
        <taxon>Clostridiaceae</taxon>
        <taxon>Clostridium</taxon>
    </lineage>
</organism>
<protein>
    <recommendedName>
        <fullName evidence="1">GMP synthase [glutamine-hydrolyzing]</fullName>
        <ecNumber evidence="1">6.3.5.2</ecNumber>
    </recommendedName>
    <alternativeName>
        <fullName evidence="1">GMP synthetase</fullName>
    </alternativeName>
    <alternativeName>
        <fullName evidence="1">Glutamine amidotransferase</fullName>
    </alternativeName>
</protein>
<gene>
    <name evidence="1" type="primary">guaA</name>
    <name type="ordered locus">CLI_3465</name>
</gene>
<dbReference type="EC" id="6.3.5.2" evidence="1"/>
<dbReference type="EMBL" id="CP000728">
    <property type="protein sequence ID" value="ABS41482.1"/>
    <property type="molecule type" value="Genomic_DNA"/>
</dbReference>
<dbReference type="RefSeq" id="WP_003400685.1">
    <property type="nucleotide sequence ID" value="NC_009699.1"/>
</dbReference>
<dbReference type="SMR" id="A7GIN0"/>
<dbReference type="MEROPS" id="C26.957"/>
<dbReference type="KEGG" id="cbf:CLI_3465"/>
<dbReference type="HOGENOM" id="CLU_014340_0_5_9"/>
<dbReference type="UniPathway" id="UPA00189">
    <property type="reaction ID" value="UER00296"/>
</dbReference>
<dbReference type="Proteomes" id="UP000002410">
    <property type="component" value="Chromosome"/>
</dbReference>
<dbReference type="GO" id="GO:0005829">
    <property type="term" value="C:cytosol"/>
    <property type="evidence" value="ECO:0007669"/>
    <property type="project" value="TreeGrafter"/>
</dbReference>
<dbReference type="GO" id="GO:0005524">
    <property type="term" value="F:ATP binding"/>
    <property type="evidence" value="ECO:0007669"/>
    <property type="project" value="UniProtKB-UniRule"/>
</dbReference>
<dbReference type="GO" id="GO:0003921">
    <property type="term" value="F:GMP synthase activity"/>
    <property type="evidence" value="ECO:0007669"/>
    <property type="project" value="InterPro"/>
</dbReference>
<dbReference type="CDD" id="cd01742">
    <property type="entry name" value="GATase1_GMP_Synthase"/>
    <property type="match status" value="1"/>
</dbReference>
<dbReference type="CDD" id="cd01997">
    <property type="entry name" value="GMP_synthase_C"/>
    <property type="match status" value="1"/>
</dbReference>
<dbReference type="FunFam" id="3.30.300.10:FF:000002">
    <property type="entry name" value="GMP synthase [glutamine-hydrolyzing]"/>
    <property type="match status" value="1"/>
</dbReference>
<dbReference type="FunFam" id="3.40.50.620:FF:000001">
    <property type="entry name" value="GMP synthase [glutamine-hydrolyzing]"/>
    <property type="match status" value="1"/>
</dbReference>
<dbReference type="FunFam" id="3.40.50.880:FF:000001">
    <property type="entry name" value="GMP synthase [glutamine-hydrolyzing]"/>
    <property type="match status" value="1"/>
</dbReference>
<dbReference type="Gene3D" id="3.30.300.10">
    <property type="match status" value="1"/>
</dbReference>
<dbReference type="Gene3D" id="3.40.50.880">
    <property type="match status" value="1"/>
</dbReference>
<dbReference type="Gene3D" id="3.40.50.620">
    <property type="entry name" value="HUPs"/>
    <property type="match status" value="1"/>
</dbReference>
<dbReference type="HAMAP" id="MF_00344">
    <property type="entry name" value="GMP_synthase"/>
    <property type="match status" value="1"/>
</dbReference>
<dbReference type="InterPro" id="IPR029062">
    <property type="entry name" value="Class_I_gatase-like"/>
</dbReference>
<dbReference type="InterPro" id="IPR017926">
    <property type="entry name" value="GATASE"/>
</dbReference>
<dbReference type="InterPro" id="IPR001674">
    <property type="entry name" value="GMP_synth_C"/>
</dbReference>
<dbReference type="InterPro" id="IPR004739">
    <property type="entry name" value="GMP_synth_GATase"/>
</dbReference>
<dbReference type="InterPro" id="IPR022955">
    <property type="entry name" value="GMP_synthase"/>
</dbReference>
<dbReference type="InterPro" id="IPR025777">
    <property type="entry name" value="GMPS_ATP_PPase_dom"/>
</dbReference>
<dbReference type="InterPro" id="IPR022310">
    <property type="entry name" value="NAD/GMP_synthase"/>
</dbReference>
<dbReference type="InterPro" id="IPR014729">
    <property type="entry name" value="Rossmann-like_a/b/a_fold"/>
</dbReference>
<dbReference type="NCBIfam" id="TIGR00884">
    <property type="entry name" value="guaA_Cterm"/>
    <property type="match status" value="1"/>
</dbReference>
<dbReference type="NCBIfam" id="TIGR00888">
    <property type="entry name" value="guaA_Nterm"/>
    <property type="match status" value="1"/>
</dbReference>
<dbReference type="NCBIfam" id="NF000848">
    <property type="entry name" value="PRK00074.1"/>
    <property type="match status" value="1"/>
</dbReference>
<dbReference type="PANTHER" id="PTHR11922:SF2">
    <property type="entry name" value="GMP SYNTHASE [GLUTAMINE-HYDROLYZING]"/>
    <property type="match status" value="1"/>
</dbReference>
<dbReference type="PANTHER" id="PTHR11922">
    <property type="entry name" value="GMP SYNTHASE-RELATED"/>
    <property type="match status" value="1"/>
</dbReference>
<dbReference type="Pfam" id="PF00117">
    <property type="entry name" value="GATase"/>
    <property type="match status" value="1"/>
</dbReference>
<dbReference type="Pfam" id="PF00958">
    <property type="entry name" value="GMP_synt_C"/>
    <property type="match status" value="1"/>
</dbReference>
<dbReference type="Pfam" id="PF02540">
    <property type="entry name" value="NAD_synthase"/>
    <property type="match status" value="1"/>
</dbReference>
<dbReference type="PRINTS" id="PR00099">
    <property type="entry name" value="CPSGATASE"/>
</dbReference>
<dbReference type="PRINTS" id="PR00096">
    <property type="entry name" value="GATASE"/>
</dbReference>
<dbReference type="SUPFAM" id="SSF52402">
    <property type="entry name" value="Adenine nucleotide alpha hydrolases-like"/>
    <property type="match status" value="1"/>
</dbReference>
<dbReference type="SUPFAM" id="SSF52317">
    <property type="entry name" value="Class I glutamine amidotransferase-like"/>
    <property type="match status" value="1"/>
</dbReference>
<dbReference type="PROSITE" id="PS51273">
    <property type="entry name" value="GATASE_TYPE_1"/>
    <property type="match status" value="1"/>
</dbReference>
<dbReference type="PROSITE" id="PS51553">
    <property type="entry name" value="GMPS_ATP_PPASE"/>
    <property type="match status" value="1"/>
</dbReference>
<evidence type="ECO:0000255" key="1">
    <source>
        <dbReference type="HAMAP-Rule" id="MF_00344"/>
    </source>
</evidence>
<reference key="1">
    <citation type="submission" date="2007-06" db="EMBL/GenBank/DDBJ databases">
        <authorList>
            <person name="Brinkac L.M."/>
            <person name="Daugherty S."/>
            <person name="Dodson R.J."/>
            <person name="Madupu R."/>
            <person name="Brown J.L."/>
            <person name="Bruce D."/>
            <person name="Detter C."/>
            <person name="Munk C."/>
            <person name="Smith L.A."/>
            <person name="Smith T.J."/>
            <person name="White O."/>
            <person name="Brettin T.S."/>
        </authorList>
    </citation>
    <scope>NUCLEOTIDE SEQUENCE [LARGE SCALE GENOMIC DNA]</scope>
    <source>
        <strain>Langeland / NCTC 10281 / Type F</strain>
    </source>
</reference>
<keyword id="KW-0067">ATP-binding</keyword>
<keyword id="KW-0315">Glutamine amidotransferase</keyword>
<keyword id="KW-0332">GMP biosynthesis</keyword>
<keyword id="KW-0436">Ligase</keyword>
<keyword id="KW-0547">Nucleotide-binding</keyword>
<keyword id="KW-0658">Purine biosynthesis</keyword>
<feature type="chain" id="PRO_1000120260" description="GMP synthase [glutamine-hydrolyzing]">
    <location>
        <begin position="1"/>
        <end position="510"/>
    </location>
</feature>
<feature type="domain" description="Glutamine amidotransferase type-1" evidence="1">
    <location>
        <begin position="5"/>
        <end position="195"/>
    </location>
</feature>
<feature type="domain" description="GMPS ATP-PPase" evidence="1">
    <location>
        <begin position="196"/>
        <end position="385"/>
    </location>
</feature>
<feature type="active site" description="Nucleophile" evidence="1">
    <location>
        <position position="82"/>
    </location>
</feature>
<feature type="active site" evidence="1">
    <location>
        <position position="169"/>
    </location>
</feature>
<feature type="active site" evidence="1">
    <location>
        <position position="171"/>
    </location>
</feature>
<feature type="binding site" evidence="1">
    <location>
        <begin position="223"/>
        <end position="229"/>
    </location>
    <ligand>
        <name>ATP</name>
        <dbReference type="ChEBI" id="CHEBI:30616"/>
    </ligand>
</feature>